<name>RR19_SACOF</name>
<organism>
    <name type="scientific">Saccharum officinarum</name>
    <name type="common">Sugarcane</name>
    <dbReference type="NCBI Taxonomy" id="4547"/>
    <lineage>
        <taxon>Eukaryota</taxon>
        <taxon>Viridiplantae</taxon>
        <taxon>Streptophyta</taxon>
        <taxon>Embryophyta</taxon>
        <taxon>Tracheophyta</taxon>
        <taxon>Spermatophyta</taxon>
        <taxon>Magnoliopsida</taxon>
        <taxon>Liliopsida</taxon>
        <taxon>Poales</taxon>
        <taxon>Poaceae</taxon>
        <taxon>PACMAD clade</taxon>
        <taxon>Panicoideae</taxon>
        <taxon>Andropogonodae</taxon>
        <taxon>Andropogoneae</taxon>
        <taxon>Saccharinae</taxon>
        <taxon>Saccharum</taxon>
        <taxon>Saccharum officinarum species complex</taxon>
    </lineage>
</organism>
<keyword id="KW-0150">Chloroplast</keyword>
<keyword id="KW-0934">Plastid</keyword>
<keyword id="KW-0687">Ribonucleoprotein</keyword>
<keyword id="KW-0689">Ribosomal protein</keyword>
<keyword id="KW-0694">RNA-binding</keyword>
<keyword id="KW-0699">rRNA-binding</keyword>
<comment type="function">
    <text evidence="1">Protein S19 forms a complex with S13 that binds strongly to the 16S ribosomal RNA.</text>
</comment>
<comment type="subcellular location">
    <subcellularLocation>
        <location>Plastid</location>
        <location>Chloroplast</location>
    </subcellularLocation>
</comment>
<comment type="similarity">
    <text evidence="1">Belongs to the universal ribosomal protein uS19 family.</text>
</comment>
<accession>Q6ENS3</accession>
<dbReference type="EMBL" id="AP006714">
    <property type="protein sequence ID" value="BAD27333.1"/>
    <property type="molecule type" value="Genomic_DNA"/>
</dbReference>
<dbReference type="EMBL" id="AP006714">
    <property type="protein sequence ID" value="BAD27387.1"/>
    <property type="molecule type" value="Genomic_DNA"/>
</dbReference>
<dbReference type="RefSeq" id="YP_009389611.1">
    <property type="nucleotide sequence ID" value="NC_035224.1"/>
</dbReference>
<dbReference type="RefSeq" id="YP_009389654.1">
    <property type="nucleotide sequence ID" value="NC_035224.1"/>
</dbReference>
<dbReference type="SMR" id="Q6ENS3"/>
<dbReference type="GeneID" id="33347831"/>
<dbReference type="GeneID" id="33347875"/>
<dbReference type="GO" id="GO:0009507">
    <property type="term" value="C:chloroplast"/>
    <property type="evidence" value="ECO:0007669"/>
    <property type="project" value="UniProtKB-SubCell"/>
</dbReference>
<dbReference type="GO" id="GO:0005763">
    <property type="term" value="C:mitochondrial small ribosomal subunit"/>
    <property type="evidence" value="ECO:0007669"/>
    <property type="project" value="TreeGrafter"/>
</dbReference>
<dbReference type="GO" id="GO:0019843">
    <property type="term" value="F:rRNA binding"/>
    <property type="evidence" value="ECO:0007669"/>
    <property type="project" value="UniProtKB-UniRule"/>
</dbReference>
<dbReference type="GO" id="GO:0003735">
    <property type="term" value="F:structural constituent of ribosome"/>
    <property type="evidence" value="ECO:0007669"/>
    <property type="project" value="InterPro"/>
</dbReference>
<dbReference type="GO" id="GO:0000028">
    <property type="term" value="P:ribosomal small subunit assembly"/>
    <property type="evidence" value="ECO:0007669"/>
    <property type="project" value="TreeGrafter"/>
</dbReference>
<dbReference type="GO" id="GO:0006412">
    <property type="term" value="P:translation"/>
    <property type="evidence" value="ECO:0007669"/>
    <property type="project" value="UniProtKB-UniRule"/>
</dbReference>
<dbReference type="FunFam" id="3.30.860.10:FF:000001">
    <property type="entry name" value="30S ribosomal protein S19"/>
    <property type="match status" value="1"/>
</dbReference>
<dbReference type="Gene3D" id="3.30.860.10">
    <property type="entry name" value="30s Ribosomal Protein S19, Chain A"/>
    <property type="match status" value="1"/>
</dbReference>
<dbReference type="HAMAP" id="MF_00531">
    <property type="entry name" value="Ribosomal_uS19"/>
    <property type="match status" value="1"/>
</dbReference>
<dbReference type="InterPro" id="IPR002222">
    <property type="entry name" value="Ribosomal_uS19"/>
</dbReference>
<dbReference type="InterPro" id="IPR005732">
    <property type="entry name" value="Ribosomal_uS19_bac-type"/>
</dbReference>
<dbReference type="InterPro" id="IPR020934">
    <property type="entry name" value="Ribosomal_uS19_CS"/>
</dbReference>
<dbReference type="InterPro" id="IPR023575">
    <property type="entry name" value="Ribosomal_uS19_SF"/>
</dbReference>
<dbReference type="NCBIfam" id="TIGR01050">
    <property type="entry name" value="rpsS_bact"/>
    <property type="match status" value="1"/>
</dbReference>
<dbReference type="PANTHER" id="PTHR11880">
    <property type="entry name" value="RIBOSOMAL PROTEIN S19P FAMILY MEMBER"/>
    <property type="match status" value="1"/>
</dbReference>
<dbReference type="PANTHER" id="PTHR11880:SF8">
    <property type="entry name" value="SMALL RIBOSOMAL SUBUNIT PROTEIN US19M"/>
    <property type="match status" value="1"/>
</dbReference>
<dbReference type="Pfam" id="PF00203">
    <property type="entry name" value="Ribosomal_S19"/>
    <property type="match status" value="1"/>
</dbReference>
<dbReference type="PIRSF" id="PIRSF002144">
    <property type="entry name" value="Ribosomal_S19"/>
    <property type="match status" value="1"/>
</dbReference>
<dbReference type="PRINTS" id="PR00975">
    <property type="entry name" value="RIBOSOMALS19"/>
</dbReference>
<dbReference type="SUPFAM" id="SSF54570">
    <property type="entry name" value="Ribosomal protein S19"/>
    <property type="match status" value="1"/>
</dbReference>
<dbReference type="PROSITE" id="PS00323">
    <property type="entry name" value="RIBOSOMAL_S19"/>
    <property type="match status" value="1"/>
</dbReference>
<geneLocation type="chloroplast"/>
<sequence>MTRKKTNPFVARHLLAKIEKVNMKEEKEIIVTWSRASSILPAMVGHTIAIHNGKEHIPIYITNPMVGRKLGEFVPTRHFTSYESTRKDTKSRR</sequence>
<evidence type="ECO:0000255" key="1">
    <source>
        <dbReference type="HAMAP-Rule" id="MF_00531"/>
    </source>
</evidence>
<evidence type="ECO:0000305" key="2"/>
<proteinExistence type="inferred from homology"/>
<protein>
    <recommendedName>
        <fullName evidence="1">Small ribosomal subunit protein uS19c</fullName>
    </recommendedName>
    <alternativeName>
        <fullName evidence="2">30S ribosomal protein S19, chloroplastic</fullName>
    </alternativeName>
</protein>
<gene>
    <name evidence="1" type="primary">rps19</name>
</gene>
<reference key="1">
    <citation type="journal article" date="2004" name="DNA Res.">
        <title>Complete nucleotide sequence of the sugarcane (Saccharum officinarum) chloroplast genome: a comparative analysis of four monocot chloroplast genomes.</title>
        <authorList>
            <person name="Asano T."/>
            <person name="Tsudzuki T."/>
            <person name="Takahashi S."/>
            <person name="Shimada H."/>
            <person name="Kadowaki K."/>
        </authorList>
    </citation>
    <scope>NUCLEOTIDE SEQUENCE [LARGE SCALE GENOMIC DNA]</scope>
</reference>
<feature type="chain" id="PRO_0000129989" description="Small ribosomal subunit protein uS19c">
    <location>
        <begin position="1"/>
        <end position="93"/>
    </location>
</feature>